<protein>
    <recommendedName>
        <fullName evidence="4">Rubisco accumulation factor 1.2, chloroplastic</fullName>
    </recommendedName>
</protein>
<name>RAF2_ARATH</name>
<evidence type="ECO:0000250" key="1">
    <source>
        <dbReference type="UniProtKB" id="Q8YLP6"/>
    </source>
</evidence>
<evidence type="ECO:0000255" key="2"/>
<evidence type="ECO:0000269" key="3">
    <source>
    </source>
</evidence>
<evidence type="ECO:0000303" key="4">
    <source>
    </source>
</evidence>
<evidence type="ECO:0000305" key="5"/>
<evidence type="ECO:0000305" key="6">
    <source>
    </source>
</evidence>
<evidence type="ECO:0000312" key="7">
    <source>
        <dbReference type="Araport" id="AT3G04550"/>
    </source>
</evidence>
<evidence type="ECO:0000312" key="8">
    <source>
        <dbReference type="EMBL" id="AAF04886.1"/>
    </source>
</evidence>
<evidence type="ECO:0007744" key="9">
    <source>
        <dbReference type="PDB" id="4WT3"/>
    </source>
</evidence>
<evidence type="ECO:0007744" key="10">
    <source>
        <dbReference type="PDB" id="4WT4"/>
    </source>
</evidence>
<evidence type="ECO:0007744" key="11">
    <source>
        <dbReference type="PDB" id="4WT5"/>
    </source>
</evidence>
<evidence type="ECO:0007829" key="12">
    <source>
        <dbReference type="PDB" id="4WT3"/>
    </source>
</evidence>
<evidence type="ECO:0007829" key="13">
    <source>
        <dbReference type="PDB" id="4WT4"/>
    </source>
</evidence>
<evidence type="ECO:0007829" key="14">
    <source>
        <dbReference type="PDB" id="4WT5"/>
    </source>
</evidence>
<evidence type="ECO:0007829" key="15">
    <source>
        <dbReference type="PDB" id="8ILB"/>
    </source>
</evidence>
<evidence type="ECO:0007829" key="16">
    <source>
        <dbReference type="PDB" id="8IO2"/>
    </source>
</evidence>
<organism>
    <name type="scientific">Arabidopsis thaliana</name>
    <name type="common">Mouse-ear cress</name>
    <dbReference type="NCBI Taxonomy" id="3702"/>
    <lineage>
        <taxon>Eukaryota</taxon>
        <taxon>Viridiplantae</taxon>
        <taxon>Streptophyta</taxon>
        <taxon>Embryophyta</taxon>
        <taxon>Tracheophyta</taxon>
        <taxon>Spermatophyta</taxon>
        <taxon>Magnoliopsida</taxon>
        <taxon>eudicotyledons</taxon>
        <taxon>Gunneridae</taxon>
        <taxon>Pentapetalae</taxon>
        <taxon>rosids</taxon>
        <taxon>malvids</taxon>
        <taxon>Brassicales</taxon>
        <taxon>Brassicaceae</taxon>
        <taxon>Camelineae</taxon>
        <taxon>Arabidopsis</taxon>
    </lineage>
</organism>
<comment type="function">
    <text evidence="3">Required for assembly or stability of RuBisCO. Acts at a postchaperonin step to fold and/or assemble the large subunit (rbcL) into RuBisCO. RAF1 brackets an rbcL dimer (rbcL(2)), leading to rbcL(8)-RAF1(4) complex formation. In the next step, RBCS displaces RAF1, thus resulting in holoenzyme formation.</text>
</comment>
<comment type="subunit">
    <text evidence="3">Homodimer.</text>
</comment>
<comment type="subcellular location">
    <subcellularLocation>
        <location evidence="5">Plastid</location>
        <location evidence="5">Chloroplast</location>
    </subcellularLocation>
</comment>
<comment type="domain">
    <text evidence="1 3 6">Has 3 domains, the N-terminal alpha-helical domain, an extended flexible linker and the C-terminal beta-sheet domain. The N-terminal alpha-helical domain stabilizes RbcL dimers and RbcL dimer-dimer interactions, facilitating RbcL(8) formation (PubMed:26237510). The C-terminal beta-sheet domain probably dimerizes Raf1 (Probable). The 2 C-terminal beta-sheet domains are swapped and pack against each other to form the dimer interface (By similarity).</text>
</comment>
<comment type="similarity">
    <text evidence="5">Belongs to the RAF family.</text>
</comment>
<reference key="1">
    <citation type="journal article" date="2000" name="Nature">
        <title>Sequence and analysis of chromosome 3 of the plant Arabidopsis thaliana.</title>
        <authorList>
            <person name="Salanoubat M."/>
            <person name="Lemcke K."/>
            <person name="Rieger M."/>
            <person name="Ansorge W."/>
            <person name="Unseld M."/>
            <person name="Fartmann B."/>
            <person name="Valle G."/>
            <person name="Bloecker H."/>
            <person name="Perez-Alonso M."/>
            <person name="Obermaier B."/>
            <person name="Delseny M."/>
            <person name="Boutry M."/>
            <person name="Grivell L.A."/>
            <person name="Mache R."/>
            <person name="Puigdomenech P."/>
            <person name="De Simone V."/>
            <person name="Choisne N."/>
            <person name="Artiguenave F."/>
            <person name="Robert C."/>
            <person name="Brottier P."/>
            <person name="Wincker P."/>
            <person name="Cattolico L."/>
            <person name="Weissenbach J."/>
            <person name="Saurin W."/>
            <person name="Quetier F."/>
            <person name="Schaefer M."/>
            <person name="Mueller-Auer S."/>
            <person name="Gabel C."/>
            <person name="Fuchs M."/>
            <person name="Benes V."/>
            <person name="Wurmbach E."/>
            <person name="Drzonek H."/>
            <person name="Erfle H."/>
            <person name="Jordan N."/>
            <person name="Bangert S."/>
            <person name="Wiedelmann R."/>
            <person name="Kranz H."/>
            <person name="Voss H."/>
            <person name="Holland R."/>
            <person name="Brandt P."/>
            <person name="Nyakatura G."/>
            <person name="Vezzi A."/>
            <person name="D'Angelo M."/>
            <person name="Pallavicini A."/>
            <person name="Toppo S."/>
            <person name="Simionati B."/>
            <person name="Conrad A."/>
            <person name="Hornischer K."/>
            <person name="Kauer G."/>
            <person name="Loehnert T.-H."/>
            <person name="Nordsiek G."/>
            <person name="Reichelt J."/>
            <person name="Scharfe M."/>
            <person name="Schoen O."/>
            <person name="Bargues M."/>
            <person name="Terol J."/>
            <person name="Climent J."/>
            <person name="Navarro P."/>
            <person name="Collado C."/>
            <person name="Perez-Perez A."/>
            <person name="Ottenwaelder B."/>
            <person name="Duchemin D."/>
            <person name="Cooke R."/>
            <person name="Laudie M."/>
            <person name="Berger-Llauro C."/>
            <person name="Purnelle B."/>
            <person name="Masuy D."/>
            <person name="de Haan M."/>
            <person name="Maarse A.C."/>
            <person name="Alcaraz J.-P."/>
            <person name="Cottet A."/>
            <person name="Casacuberta E."/>
            <person name="Monfort A."/>
            <person name="Argiriou A."/>
            <person name="Flores M."/>
            <person name="Liguori R."/>
            <person name="Vitale D."/>
            <person name="Mannhaupt G."/>
            <person name="Haase D."/>
            <person name="Schoof H."/>
            <person name="Rudd S."/>
            <person name="Zaccaria P."/>
            <person name="Mewes H.-W."/>
            <person name="Mayer K.F.X."/>
            <person name="Kaul S."/>
            <person name="Town C.D."/>
            <person name="Koo H.L."/>
            <person name="Tallon L.J."/>
            <person name="Jenkins J."/>
            <person name="Rooney T."/>
            <person name="Rizzo M."/>
            <person name="Walts A."/>
            <person name="Utterback T."/>
            <person name="Fujii C.Y."/>
            <person name="Shea T.P."/>
            <person name="Creasy T.H."/>
            <person name="Haas B."/>
            <person name="Maiti R."/>
            <person name="Wu D."/>
            <person name="Peterson J."/>
            <person name="Van Aken S."/>
            <person name="Pai G."/>
            <person name="Militscher J."/>
            <person name="Sellers P."/>
            <person name="Gill J.E."/>
            <person name="Feldblyum T.V."/>
            <person name="Preuss D."/>
            <person name="Lin X."/>
            <person name="Nierman W.C."/>
            <person name="Salzberg S.L."/>
            <person name="White O."/>
            <person name="Venter J.C."/>
            <person name="Fraser C.M."/>
            <person name="Kaneko T."/>
            <person name="Nakamura Y."/>
            <person name="Sato S."/>
            <person name="Kato T."/>
            <person name="Asamizu E."/>
            <person name="Sasamoto S."/>
            <person name="Kimura T."/>
            <person name="Idesawa K."/>
            <person name="Kawashima K."/>
            <person name="Kishida Y."/>
            <person name="Kiyokawa C."/>
            <person name="Kohara M."/>
            <person name="Matsumoto M."/>
            <person name="Matsuno A."/>
            <person name="Muraki A."/>
            <person name="Nakayama S."/>
            <person name="Nakazaki N."/>
            <person name="Shinpo S."/>
            <person name="Takeuchi C."/>
            <person name="Wada T."/>
            <person name="Watanabe A."/>
            <person name="Yamada M."/>
            <person name="Yasuda M."/>
            <person name="Tabata S."/>
        </authorList>
    </citation>
    <scope>NUCLEOTIDE SEQUENCE [LARGE SCALE GENOMIC DNA]</scope>
    <source>
        <strain>cv. Columbia</strain>
    </source>
</reference>
<reference key="2">
    <citation type="journal article" date="2017" name="Plant J.">
        <title>Araport11: a complete reannotation of the Arabidopsis thaliana reference genome.</title>
        <authorList>
            <person name="Cheng C.Y."/>
            <person name="Krishnakumar V."/>
            <person name="Chan A.P."/>
            <person name="Thibaud-Nissen F."/>
            <person name="Schobel S."/>
            <person name="Town C.D."/>
        </authorList>
    </citation>
    <scope>GENOME REANNOTATION</scope>
    <source>
        <strain>cv. Columbia</strain>
    </source>
</reference>
<reference key="3">
    <citation type="journal article" date="2003" name="Science">
        <title>Empirical analysis of transcriptional activity in the Arabidopsis genome.</title>
        <authorList>
            <person name="Yamada K."/>
            <person name="Lim J."/>
            <person name="Dale J.M."/>
            <person name="Chen H."/>
            <person name="Shinn P."/>
            <person name="Palm C.J."/>
            <person name="Southwick A.M."/>
            <person name="Wu H.C."/>
            <person name="Kim C.J."/>
            <person name="Nguyen M."/>
            <person name="Pham P.K."/>
            <person name="Cheuk R.F."/>
            <person name="Karlin-Newmann G."/>
            <person name="Liu S.X."/>
            <person name="Lam B."/>
            <person name="Sakano H."/>
            <person name="Wu T."/>
            <person name="Yu G."/>
            <person name="Miranda M."/>
            <person name="Quach H.L."/>
            <person name="Tripp M."/>
            <person name="Chang C.H."/>
            <person name="Lee J.M."/>
            <person name="Toriumi M.J."/>
            <person name="Chan M.M."/>
            <person name="Tang C.C."/>
            <person name="Onodera C.S."/>
            <person name="Deng J.M."/>
            <person name="Akiyama K."/>
            <person name="Ansari Y."/>
            <person name="Arakawa T."/>
            <person name="Banh J."/>
            <person name="Banno F."/>
            <person name="Bowser L."/>
            <person name="Brooks S.Y."/>
            <person name="Carninci P."/>
            <person name="Chao Q."/>
            <person name="Choy N."/>
            <person name="Enju A."/>
            <person name="Goldsmith A.D."/>
            <person name="Gurjal M."/>
            <person name="Hansen N.F."/>
            <person name="Hayashizaki Y."/>
            <person name="Johnson-Hopson C."/>
            <person name="Hsuan V.W."/>
            <person name="Iida K."/>
            <person name="Karnes M."/>
            <person name="Khan S."/>
            <person name="Koesema E."/>
            <person name="Ishida J."/>
            <person name="Jiang P.X."/>
            <person name="Jones T."/>
            <person name="Kawai J."/>
            <person name="Kamiya A."/>
            <person name="Meyers C."/>
            <person name="Nakajima M."/>
            <person name="Narusaka M."/>
            <person name="Seki M."/>
            <person name="Sakurai T."/>
            <person name="Satou M."/>
            <person name="Tamse R."/>
            <person name="Vaysberg M."/>
            <person name="Wallender E.K."/>
            <person name="Wong C."/>
            <person name="Yamamura Y."/>
            <person name="Yuan S."/>
            <person name="Shinozaki K."/>
            <person name="Davis R.W."/>
            <person name="Theologis A."/>
            <person name="Ecker J.R."/>
        </authorList>
    </citation>
    <scope>NUCLEOTIDE SEQUENCE [LARGE SCALE MRNA]</scope>
    <source>
        <strain>cv. Columbia</strain>
    </source>
</reference>
<reference key="4">
    <citation type="journal article" date="2012" name="Plant Cell">
        <title>Ribulose-1,5-bis-phosphate carboxylase/oxygenase accumulation factor1 is required for holoenzyme assembly in maize.</title>
        <authorList>
            <person name="Feiz L."/>
            <person name="Williams-Carrier R."/>
            <person name="Wostrikoff K."/>
            <person name="Belcher S."/>
            <person name="Barkan A."/>
            <person name="Stern D.B."/>
        </authorList>
    </citation>
    <scope>IDENTIFICATION</scope>
</reference>
<reference evidence="9 10 11" key="5">
    <citation type="journal article" date="2015" name="Nat. Struct. Mol. Biol.">
        <title>Structure and mechanism of the Rubisco-assembly chaperone Raf1.</title>
        <authorList>
            <person name="Hauser T."/>
            <person name="Bhat J.Y."/>
            <person name="Milicic G."/>
            <person name="Wendler P."/>
            <person name="Hartl F.U."/>
            <person name="Bracher A."/>
            <person name="Hayer-Hartl M."/>
        </authorList>
    </citation>
    <scope>X-RAY CRYSTALLOGRAPHY (1.95 ANGSTROMS) OF 62-274</scope>
    <scope>X-RAY CRYSTALLOGRAPHY (2.57 ANGSTROMS) OF 281-449</scope>
    <scope>SUBUNIT</scope>
    <scope>FUNCTION</scope>
</reference>
<keyword id="KW-0002">3D-structure</keyword>
<keyword id="KW-0143">Chaperone</keyword>
<keyword id="KW-0150">Chloroplast</keyword>
<keyword id="KW-0175">Coiled coil</keyword>
<keyword id="KW-0934">Plastid</keyword>
<keyword id="KW-1185">Reference proteome</keyword>
<keyword id="KW-0809">Transit peptide</keyword>
<feature type="transit peptide" description="Chloroplast" evidence="2">
    <location>
        <begin position="1"/>
        <end position="61"/>
    </location>
</feature>
<feature type="chain" id="PRO_0000424243" description="Rubisco accumulation factor 1.2, chloroplastic">
    <location>
        <begin position="62"/>
        <end position="449"/>
    </location>
</feature>
<feature type="region of interest" description="N-terminal alpha-helix" evidence="6">
    <location>
        <begin position="75"/>
        <end position="264"/>
    </location>
</feature>
<feature type="region of interest" description="C-terminal beta sheet" evidence="6">
    <location>
        <begin position="288"/>
        <end position="434"/>
    </location>
</feature>
<feature type="coiled-coil region" evidence="2">
    <location>
        <begin position="262"/>
        <end position="288"/>
    </location>
</feature>
<feature type="helix" evidence="12">
    <location>
        <begin position="77"/>
        <end position="79"/>
    </location>
</feature>
<feature type="helix" evidence="12">
    <location>
        <begin position="84"/>
        <end position="92"/>
    </location>
</feature>
<feature type="helix" evidence="12">
    <location>
        <begin position="98"/>
        <end position="111"/>
    </location>
</feature>
<feature type="helix" evidence="12">
    <location>
        <begin position="115"/>
        <end position="122"/>
    </location>
</feature>
<feature type="helix" evidence="12">
    <location>
        <begin position="126"/>
        <end position="144"/>
    </location>
</feature>
<feature type="helix" evidence="12">
    <location>
        <begin position="149"/>
        <end position="153"/>
    </location>
</feature>
<feature type="turn" evidence="12">
    <location>
        <begin position="154"/>
        <end position="158"/>
    </location>
</feature>
<feature type="helix" evidence="12">
    <location>
        <begin position="160"/>
        <end position="165"/>
    </location>
</feature>
<feature type="turn" evidence="12">
    <location>
        <begin position="166"/>
        <end position="168"/>
    </location>
</feature>
<feature type="helix" evidence="12">
    <location>
        <begin position="171"/>
        <end position="183"/>
    </location>
</feature>
<feature type="helix" evidence="12">
    <location>
        <begin position="188"/>
        <end position="200"/>
    </location>
</feature>
<feature type="helix" evidence="12">
    <location>
        <begin position="201"/>
        <end position="204"/>
    </location>
</feature>
<feature type="strand" evidence="16">
    <location>
        <begin position="206"/>
        <end position="209"/>
    </location>
</feature>
<feature type="helix" evidence="12">
    <location>
        <begin position="210"/>
        <end position="212"/>
    </location>
</feature>
<feature type="strand" evidence="15">
    <location>
        <begin position="215"/>
        <end position="217"/>
    </location>
</feature>
<feature type="helix" evidence="12">
    <location>
        <begin position="218"/>
        <end position="232"/>
    </location>
</feature>
<feature type="strand" evidence="16">
    <location>
        <begin position="233"/>
        <end position="236"/>
    </location>
</feature>
<feature type="helix" evidence="12">
    <location>
        <begin position="238"/>
        <end position="250"/>
    </location>
</feature>
<feature type="helix" evidence="12">
    <location>
        <begin position="254"/>
        <end position="265"/>
    </location>
</feature>
<feature type="strand" evidence="14">
    <location>
        <begin position="290"/>
        <end position="292"/>
    </location>
</feature>
<feature type="strand" evidence="14">
    <location>
        <begin position="302"/>
        <end position="311"/>
    </location>
</feature>
<feature type="helix" evidence="14">
    <location>
        <begin position="312"/>
        <end position="314"/>
    </location>
</feature>
<feature type="helix" evidence="14">
    <location>
        <begin position="316"/>
        <end position="321"/>
    </location>
</feature>
<feature type="strand" evidence="14">
    <location>
        <begin position="326"/>
        <end position="329"/>
    </location>
</feature>
<feature type="turn" evidence="14">
    <location>
        <begin position="330"/>
        <end position="333"/>
    </location>
</feature>
<feature type="strand" evidence="14">
    <location>
        <begin position="334"/>
        <end position="339"/>
    </location>
</feature>
<feature type="strand" evidence="14">
    <location>
        <begin position="342"/>
        <end position="348"/>
    </location>
</feature>
<feature type="helix" evidence="14">
    <location>
        <begin position="351"/>
        <end position="355"/>
    </location>
</feature>
<feature type="strand" evidence="14">
    <location>
        <begin position="360"/>
        <end position="365"/>
    </location>
</feature>
<feature type="turn" evidence="13">
    <location>
        <begin position="369"/>
        <end position="371"/>
    </location>
</feature>
<feature type="strand" evidence="14">
    <location>
        <begin position="381"/>
        <end position="387"/>
    </location>
</feature>
<feature type="strand" evidence="14">
    <location>
        <begin position="398"/>
        <end position="403"/>
    </location>
</feature>
<feature type="strand" evidence="14">
    <location>
        <begin position="406"/>
        <end position="411"/>
    </location>
</feature>
<feature type="helix" evidence="14">
    <location>
        <begin position="412"/>
        <end position="417"/>
    </location>
</feature>
<feature type="strand" evidence="14">
    <location>
        <begin position="424"/>
        <end position="432"/>
    </location>
</feature>
<sequence>MFSLKSLISSPFTQSTTHGLFTNPITRPVNPLPRTVSFTVTASMIPKRSSANMIPKNPPARQQLYQPFRPPSSPIPTQFRSLDSAGKIEILAGRMALWFEYAPLISSLYTDGFTPPTIEELTGISSIEQNRLIVGAQVRDSILQSIHEPELISAFDTGGAELLYEIRLLSTTQRVAAATFIIDRNIDSKGAQDLARAIKDYPNRRGDVGWLDFDYNLPGDCLSFLYYRQSRENKNPSDQRTSMLLQALGVAESEKAKNRLNTELYGDKEAEKEKEKKKKEEEVKAIRIPVVRLKFGEVAEATSVVVLPVCKAEEGEKKILEAPMEIIAGGDFKVVEAEKGWKRWVVLPSWNPVAAIGKGGVAVSFRDDRKVLPWDGKEEPLLVVADRVRNVVEADDGYYLVVAENGLKLEKGSDLKAREVKESLGMVVLVVRPPREDDDDWQTSHQNWD</sequence>
<dbReference type="EMBL" id="AC011437">
    <property type="protein sequence ID" value="AAF04886.1"/>
    <property type="molecule type" value="Genomic_DNA"/>
</dbReference>
<dbReference type="EMBL" id="CP002686">
    <property type="protein sequence ID" value="AEE74096.1"/>
    <property type="molecule type" value="Genomic_DNA"/>
</dbReference>
<dbReference type="EMBL" id="AY034914">
    <property type="protein sequence ID" value="AAK59421.1"/>
    <property type="molecule type" value="mRNA"/>
</dbReference>
<dbReference type="EMBL" id="AY062440">
    <property type="protein sequence ID" value="AAL32518.1"/>
    <property type="molecule type" value="mRNA"/>
</dbReference>
<dbReference type="EMBL" id="AY063107">
    <property type="protein sequence ID" value="AAL34281.1"/>
    <property type="molecule type" value="mRNA"/>
</dbReference>
<dbReference type="EMBL" id="AY114629">
    <property type="protein sequence ID" value="AAM47948.1"/>
    <property type="molecule type" value="mRNA"/>
</dbReference>
<dbReference type="RefSeq" id="NP_566230.1">
    <property type="nucleotide sequence ID" value="NM_111326.1"/>
</dbReference>
<dbReference type="PDB" id="4WT3">
    <property type="method" value="X-ray"/>
    <property type="resolution" value="1.95 A"/>
    <property type="chains" value="A=62-274"/>
</dbReference>
<dbReference type="PDB" id="4WT4">
    <property type="method" value="X-ray"/>
    <property type="resolution" value="2.81 A"/>
    <property type="chains" value="A/B/C/D=281-449"/>
</dbReference>
<dbReference type="PDB" id="4WT5">
    <property type="method" value="X-ray"/>
    <property type="resolution" value="2.57 A"/>
    <property type="chains" value="A/B=281-449"/>
</dbReference>
<dbReference type="PDB" id="8ILB">
    <property type="method" value="EM"/>
    <property type="resolution" value="3.00 A"/>
    <property type="chains" value="E/N=62-449"/>
</dbReference>
<dbReference type="PDB" id="8ILM">
    <property type="method" value="EM"/>
    <property type="resolution" value="3.30 A"/>
    <property type="chains" value="D/E/R/S=62-449"/>
</dbReference>
<dbReference type="PDB" id="8IO2">
    <property type="method" value="EM"/>
    <property type="resolution" value="3.10 A"/>
    <property type="chains" value="I/J/K/L/M/N/O/P/Q=73-437"/>
</dbReference>
<dbReference type="PDB" id="8IOJ">
    <property type="method" value="EM"/>
    <property type="resolution" value="4.10 A"/>
    <property type="chains" value="E/F/G=62-264, L/M/N/O=287-437"/>
</dbReference>
<dbReference type="PDBsum" id="4WT3"/>
<dbReference type="PDBsum" id="4WT4"/>
<dbReference type="PDBsum" id="4WT5"/>
<dbReference type="PDBsum" id="8ILB"/>
<dbReference type="PDBsum" id="8ILM"/>
<dbReference type="PDBsum" id="8IO2"/>
<dbReference type="PDBsum" id="8IOJ"/>
<dbReference type="EMDB" id="EMD-35532"/>
<dbReference type="EMDB" id="EMD-35536"/>
<dbReference type="EMDB" id="EMD-35605"/>
<dbReference type="EMDB" id="EMD-35620"/>
<dbReference type="SMR" id="Q9SR19"/>
<dbReference type="BioGRID" id="4946">
    <property type="interactions" value="1"/>
</dbReference>
<dbReference type="FunCoup" id="Q9SR19">
    <property type="interactions" value="991"/>
</dbReference>
<dbReference type="STRING" id="3702.Q9SR19"/>
<dbReference type="MetOSite" id="Q9SR19"/>
<dbReference type="PaxDb" id="3702-AT3G04550.1"/>
<dbReference type="ProMEX" id="Q9SR19"/>
<dbReference type="ProteomicsDB" id="225966"/>
<dbReference type="EnsemblPlants" id="AT3G04550.1">
    <property type="protein sequence ID" value="AT3G04550.1"/>
    <property type="gene ID" value="AT3G04550"/>
</dbReference>
<dbReference type="GeneID" id="819611"/>
<dbReference type="Gramene" id="AT3G04550.1">
    <property type="protein sequence ID" value="AT3G04550.1"/>
    <property type="gene ID" value="AT3G04550"/>
</dbReference>
<dbReference type="KEGG" id="ath:AT3G04550"/>
<dbReference type="Araport" id="AT3G04550"/>
<dbReference type="TAIR" id="AT3G04550">
    <property type="gene designation" value="RAF1"/>
</dbReference>
<dbReference type="eggNOG" id="ENOG502QRYH">
    <property type="taxonomic scope" value="Eukaryota"/>
</dbReference>
<dbReference type="HOGENOM" id="CLU_041979_0_0_1"/>
<dbReference type="InParanoid" id="Q9SR19"/>
<dbReference type="OMA" id="MALWFEY"/>
<dbReference type="OrthoDB" id="2017169at2759"/>
<dbReference type="PhylomeDB" id="Q9SR19"/>
<dbReference type="EvolutionaryTrace" id="Q9SR19"/>
<dbReference type="PRO" id="PR:Q9SR19"/>
<dbReference type="Proteomes" id="UP000006548">
    <property type="component" value="Chromosome 3"/>
</dbReference>
<dbReference type="ExpressionAtlas" id="Q9SR19">
    <property type="expression patterns" value="baseline and differential"/>
</dbReference>
<dbReference type="GO" id="GO:0009507">
    <property type="term" value="C:chloroplast"/>
    <property type="evidence" value="ECO:0007005"/>
    <property type="project" value="TAIR"/>
</dbReference>
<dbReference type="GO" id="GO:0009570">
    <property type="term" value="C:chloroplast stroma"/>
    <property type="evidence" value="ECO:0007005"/>
    <property type="project" value="TAIR"/>
</dbReference>
<dbReference type="GO" id="GO:0005829">
    <property type="term" value="C:cytosol"/>
    <property type="evidence" value="ECO:0007005"/>
    <property type="project" value="TAIR"/>
</dbReference>
<dbReference type="GO" id="GO:0110102">
    <property type="term" value="P:ribulose bisphosphate carboxylase complex assembly"/>
    <property type="evidence" value="ECO:0000314"/>
    <property type="project" value="TAIR"/>
</dbReference>
<dbReference type="DisProt" id="DP02961"/>
<dbReference type="InterPro" id="IPR037494">
    <property type="entry name" value="RAF1"/>
</dbReference>
<dbReference type="InterPro" id="IPR040858">
    <property type="entry name" value="Raf1_C"/>
</dbReference>
<dbReference type="InterPro" id="IPR040781">
    <property type="entry name" value="Raf1_HTH"/>
</dbReference>
<dbReference type="InterPro" id="IPR041358">
    <property type="entry name" value="Raf1_N"/>
</dbReference>
<dbReference type="PANTHER" id="PTHR35299">
    <property type="entry name" value="RUBISCO ACCUMULATION FACTOR 1"/>
    <property type="match status" value="1"/>
</dbReference>
<dbReference type="PANTHER" id="PTHR35299:SF3">
    <property type="entry name" value="RUBISCO ACCUMULATION FACTOR 1.2, CHLOROPLASTIC"/>
    <property type="match status" value="1"/>
</dbReference>
<dbReference type="Pfam" id="PF18579">
    <property type="entry name" value="Raf1_HTH"/>
    <property type="match status" value="1"/>
</dbReference>
<dbReference type="Pfam" id="PF18578">
    <property type="entry name" value="Raf1_N"/>
    <property type="match status" value="1"/>
</dbReference>
<dbReference type="Pfam" id="PF18087">
    <property type="entry name" value="RuBisCo_chap_C"/>
    <property type="match status" value="1"/>
</dbReference>
<proteinExistence type="evidence at protein level"/>
<gene>
    <name evidence="4" type="primary">RAF1.2</name>
    <name evidence="7" type="ordered locus">At3g04550</name>
    <name evidence="8" type="ORF">F7O18.2</name>
</gene>
<accession>Q9SR19</accession>